<keyword id="KW-0378">Hydrolase</keyword>
<name>RPPH_SHESW</name>
<proteinExistence type="inferred from homology"/>
<accession>A1RME4</accession>
<sequence>MIDSDGFRANVGIIICNRYGQVMWARRFGQHSWQFPQGGVDDGESAEEAMYRELYEEVGLRPEHVHILTSTRSWLRYRLPKRLVRQDSKPVCIGQKQKWFLLQLKSQDSAINLSSSGHPEFDDWRWVSYWYPVRQVVSFKRDVYRKVMKEFAATALSFQTQEIPRKRGRQKTTG</sequence>
<protein>
    <recommendedName>
        <fullName evidence="1">RNA pyrophosphohydrolase</fullName>
        <ecNumber evidence="1">3.6.1.-</ecNumber>
    </recommendedName>
    <alternativeName>
        <fullName evidence="1">(Di)nucleoside polyphosphate hydrolase</fullName>
    </alternativeName>
</protein>
<reference key="1">
    <citation type="submission" date="2006-12" db="EMBL/GenBank/DDBJ databases">
        <title>Complete sequence of Shewanella sp. W3-18-1.</title>
        <authorList>
            <consortium name="US DOE Joint Genome Institute"/>
            <person name="Copeland A."/>
            <person name="Lucas S."/>
            <person name="Lapidus A."/>
            <person name="Barry K."/>
            <person name="Detter J.C."/>
            <person name="Glavina del Rio T."/>
            <person name="Hammon N."/>
            <person name="Israni S."/>
            <person name="Dalin E."/>
            <person name="Tice H."/>
            <person name="Pitluck S."/>
            <person name="Chain P."/>
            <person name="Malfatti S."/>
            <person name="Shin M."/>
            <person name="Vergez L."/>
            <person name="Schmutz J."/>
            <person name="Larimer F."/>
            <person name="Land M."/>
            <person name="Hauser L."/>
            <person name="Kyrpides N."/>
            <person name="Lykidis A."/>
            <person name="Tiedje J."/>
            <person name="Richardson P."/>
        </authorList>
    </citation>
    <scope>NUCLEOTIDE SEQUENCE [LARGE SCALE GENOMIC DNA]</scope>
    <source>
        <strain>W3-18-1</strain>
    </source>
</reference>
<gene>
    <name evidence="1" type="primary">rppH</name>
    <name evidence="1" type="synonym">nudH</name>
    <name type="ordered locus">Sputw3181_3022</name>
</gene>
<comment type="function">
    <text evidence="1">Accelerates the degradation of transcripts by removing pyrophosphate from the 5'-end of triphosphorylated RNA, leading to a more labile monophosphorylated state that can stimulate subsequent ribonuclease cleavage.</text>
</comment>
<comment type="cofactor">
    <cofactor evidence="1">
        <name>a divalent metal cation</name>
        <dbReference type="ChEBI" id="CHEBI:60240"/>
    </cofactor>
</comment>
<comment type="similarity">
    <text evidence="1">Belongs to the Nudix hydrolase family. RppH subfamily.</text>
</comment>
<organism>
    <name type="scientific">Shewanella sp. (strain W3-18-1)</name>
    <dbReference type="NCBI Taxonomy" id="351745"/>
    <lineage>
        <taxon>Bacteria</taxon>
        <taxon>Pseudomonadati</taxon>
        <taxon>Pseudomonadota</taxon>
        <taxon>Gammaproteobacteria</taxon>
        <taxon>Alteromonadales</taxon>
        <taxon>Shewanellaceae</taxon>
        <taxon>Shewanella</taxon>
    </lineage>
</organism>
<dbReference type="EC" id="3.6.1.-" evidence="1"/>
<dbReference type="EMBL" id="CP000503">
    <property type="protein sequence ID" value="ABM25839.1"/>
    <property type="molecule type" value="Genomic_DNA"/>
</dbReference>
<dbReference type="RefSeq" id="WP_011790291.1">
    <property type="nucleotide sequence ID" value="NC_008750.1"/>
</dbReference>
<dbReference type="SMR" id="A1RME4"/>
<dbReference type="GeneID" id="67442659"/>
<dbReference type="KEGG" id="shw:Sputw3181_3022"/>
<dbReference type="HOGENOM" id="CLU_087195_3_2_6"/>
<dbReference type="Proteomes" id="UP000002597">
    <property type="component" value="Chromosome"/>
</dbReference>
<dbReference type="GO" id="GO:0005737">
    <property type="term" value="C:cytoplasm"/>
    <property type="evidence" value="ECO:0007669"/>
    <property type="project" value="TreeGrafter"/>
</dbReference>
<dbReference type="GO" id="GO:0034353">
    <property type="term" value="F:mRNA 5'-diphosphatase activity"/>
    <property type="evidence" value="ECO:0007669"/>
    <property type="project" value="TreeGrafter"/>
</dbReference>
<dbReference type="GO" id="GO:0006402">
    <property type="term" value="P:mRNA catabolic process"/>
    <property type="evidence" value="ECO:0007669"/>
    <property type="project" value="TreeGrafter"/>
</dbReference>
<dbReference type="CDD" id="cd03671">
    <property type="entry name" value="NUDIX_Ap4A_hydrolase_plant_like"/>
    <property type="match status" value="1"/>
</dbReference>
<dbReference type="FunFam" id="3.90.79.10:FF:000001">
    <property type="entry name" value="RNA pyrophosphohydrolase"/>
    <property type="match status" value="1"/>
</dbReference>
<dbReference type="Gene3D" id="3.90.79.10">
    <property type="entry name" value="Nucleoside Triphosphate Pyrophosphohydrolase"/>
    <property type="match status" value="1"/>
</dbReference>
<dbReference type="HAMAP" id="MF_00298">
    <property type="entry name" value="Nudix_RppH"/>
    <property type="match status" value="1"/>
</dbReference>
<dbReference type="InterPro" id="IPR020476">
    <property type="entry name" value="Nudix_hydrolase"/>
</dbReference>
<dbReference type="InterPro" id="IPR015797">
    <property type="entry name" value="NUDIX_hydrolase-like_dom_sf"/>
</dbReference>
<dbReference type="InterPro" id="IPR020084">
    <property type="entry name" value="NUDIX_hydrolase_CS"/>
</dbReference>
<dbReference type="InterPro" id="IPR000086">
    <property type="entry name" value="NUDIX_hydrolase_dom"/>
</dbReference>
<dbReference type="InterPro" id="IPR022927">
    <property type="entry name" value="RppH"/>
</dbReference>
<dbReference type="NCBIfam" id="NF001934">
    <property type="entry name" value="PRK00714.1-1"/>
    <property type="match status" value="1"/>
</dbReference>
<dbReference type="NCBIfam" id="NF001937">
    <property type="entry name" value="PRK00714.1-4"/>
    <property type="match status" value="1"/>
</dbReference>
<dbReference type="NCBIfam" id="NF001938">
    <property type="entry name" value="PRK00714.1-5"/>
    <property type="match status" value="1"/>
</dbReference>
<dbReference type="PANTHER" id="PTHR23114">
    <property type="entry name" value="M7GPPPN-MRNA HYDROLASE"/>
    <property type="match status" value="1"/>
</dbReference>
<dbReference type="PANTHER" id="PTHR23114:SF17">
    <property type="entry name" value="M7GPPPN-MRNA HYDROLASE"/>
    <property type="match status" value="1"/>
</dbReference>
<dbReference type="Pfam" id="PF00293">
    <property type="entry name" value="NUDIX"/>
    <property type="match status" value="1"/>
</dbReference>
<dbReference type="PRINTS" id="PR00502">
    <property type="entry name" value="NUDIXFAMILY"/>
</dbReference>
<dbReference type="SUPFAM" id="SSF55811">
    <property type="entry name" value="Nudix"/>
    <property type="match status" value="1"/>
</dbReference>
<dbReference type="PROSITE" id="PS51462">
    <property type="entry name" value="NUDIX"/>
    <property type="match status" value="1"/>
</dbReference>
<dbReference type="PROSITE" id="PS00893">
    <property type="entry name" value="NUDIX_BOX"/>
    <property type="match status" value="1"/>
</dbReference>
<feature type="chain" id="PRO_1000022002" description="RNA pyrophosphohydrolase">
    <location>
        <begin position="1"/>
        <end position="174"/>
    </location>
</feature>
<feature type="domain" description="Nudix hydrolase" evidence="1">
    <location>
        <begin position="6"/>
        <end position="149"/>
    </location>
</feature>
<feature type="short sequence motif" description="Nudix box">
    <location>
        <begin position="38"/>
        <end position="59"/>
    </location>
</feature>
<evidence type="ECO:0000255" key="1">
    <source>
        <dbReference type="HAMAP-Rule" id="MF_00298"/>
    </source>
</evidence>